<keyword id="KW-1185">Reference proteome</keyword>
<keyword id="KW-0687">Ribonucleoprotein</keyword>
<keyword id="KW-0689">Ribosomal protein</keyword>
<comment type="similarity">
    <text evidence="1">Belongs to the universal ribosomal protein uL29 family.</text>
</comment>
<protein>
    <recommendedName>
        <fullName evidence="1">Large ribosomal subunit protein uL29</fullName>
    </recommendedName>
    <alternativeName>
        <fullName evidence="2">50S ribosomal protein L29</fullName>
    </alternativeName>
</protein>
<name>RL29_FUSNN</name>
<proteinExistence type="inferred from homology"/>
<dbReference type="EMBL" id="AE009951">
    <property type="protein sequence ID" value="AAL93752.1"/>
    <property type="molecule type" value="Genomic_DNA"/>
</dbReference>
<dbReference type="RefSeq" id="NP_602453.1">
    <property type="nucleotide sequence ID" value="NC_003454.1"/>
</dbReference>
<dbReference type="RefSeq" id="WP_011015718.1">
    <property type="nucleotide sequence ID" value="NZ_CP028101.1"/>
</dbReference>
<dbReference type="SMR" id="Q8RIG3"/>
<dbReference type="FunCoup" id="Q8RIG3">
    <property type="interactions" value="307"/>
</dbReference>
<dbReference type="STRING" id="190304.FN1637"/>
<dbReference type="PaxDb" id="190304-FN1637"/>
<dbReference type="EnsemblBacteria" id="AAL93752">
    <property type="protein sequence ID" value="AAL93752"/>
    <property type="gene ID" value="FN1637"/>
</dbReference>
<dbReference type="GeneID" id="79782575"/>
<dbReference type="KEGG" id="fnu:FN1637"/>
<dbReference type="PATRIC" id="fig|190304.8.peg.130"/>
<dbReference type="eggNOG" id="COG0255">
    <property type="taxonomic scope" value="Bacteria"/>
</dbReference>
<dbReference type="HOGENOM" id="CLU_158491_5_2_0"/>
<dbReference type="InParanoid" id="Q8RIG3"/>
<dbReference type="BioCyc" id="FNUC190304:G1FZS-140-MONOMER"/>
<dbReference type="Proteomes" id="UP000002521">
    <property type="component" value="Chromosome"/>
</dbReference>
<dbReference type="GO" id="GO:0022625">
    <property type="term" value="C:cytosolic large ribosomal subunit"/>
    <property type="evidence" value="ECO:0000318"/>
    <property type="project" value="GO_Central"/>
</dbReference>
<dbReference type="GO" id="GO:0003735">
    <property type="term" value="F:structural constituent of ribosome"/>
    <property type="evidence" value="ECO:0007669"/>
    <property type="project" value="InterPro"/>
</dbReference>
<dbReference type="GO" id="GO:0006412">
    <property type="term" value="P:translation"/>
    <property type="evidence" value="ECO:0007669"/>
    <property type="project" value="UniProtKB-UniRule"/>
</dbReference>
<dbReference type="CDD" id="cd00427">
    <property type="entry name" value="Ribosomal_L29_HIP"/>
    <property type="match status" value="1"/>
</dbReference>
<dbReference type="FunFam" id="1.10.287.310:FF:000001">
    <property type="entry name" value="50S ribosomal protein L29"/>
    <property type="match status" value="1"/>
</dbReference>
<dbReference type="Gene3D" id="1.10.287.310">
    <property type="match status" value="1"/>
</dbReference>
<dbReference type="HAMAP" id="MF_00374">
    <property type="entry name" value="Ribosomal_uL29"/>
    <property type="match status" value="1"/>
</dbReference>
<dbReference type="InterPro" id="IPR050063">
    <property type="entry name" value="Ribosomal_protein_uL29"/>
</dbReference>
<dbReference type="InterPro" id="IPR001854">
    <property type="entry name" value="Ribosomal_uL29"/>
</dbReference>
<dbReference type="InterPro" id="IPR018254">
    <property type="entry name" value="Ribosomal_uL29_CS"/>
</dbReference>
<dbReference type="InterPro" id="IPR036049">
    <property type="entry name" value="Ribosomal_uL29_sf"/>
</dbReference>
<dbReference type="NCBIfam" id="TIGR00012">
    <property type="entry name" value="L29"/>
    <property type="match status" value="1"/>
</dbReference>
<dbReference type="PANTHER" id="PTHR10916">
    <property type="entry name" value="60S RIBOSOMAL PROTEIN L35/50S RIBOSOMAL PROTEIN L29"/>
    <property type="match status" value="1"/>
</dbReference>
<dbReference type="PANTHER" id="PTHR10916:SF0">
    <property type="entry name" value="LARGE RIBOSOMAL SUBUNIT PROTEIN UL29C"/>
    <property type="match status" value="1"/>
</dbReference>
<dbReference type="Pfam" id="PF00831">
    <property type="entry name" value="Ribosomal_L29"/>
    <property type="match status" value="1"/>
</dbReference>
<dbReference type="SUPFAM" id="SSF46561">
    <property type="entry name" value="Ribosomal protein L29 (L29p)"/>
    <property type="match status" value="1"/>
</dbReference>
<dbReference type="PROSITE" id="PS00579">
    <property type="entry name" value="RIBOSOMAL_L29"/>
    <property type="match status" value="1"/>
</dbReference>
<organism>
    <name type="scientific">Fusobacterium nucleatum subsp. nucleatum (strain ATCC 25586 / DSM 15643 / BCRC 10681 / CIP 101130 / JCM 8532 / KCTC 2640 / LMG 13131 / VPI 4355)</name>
    <dbReference type="NCBI Taxonomy" id="190304"/>
    <lineage>
        <taxon>Bacteria</taxon>
        <taxon>Fusobacteriati</taxon>
        <taxon>Fusobacteriota</taxon>
        <taxon>Fusobacteriia</taxon>
        <taxon>Fusobacteriales</taxon>
        <taxon>Fusobacteriaceae</taxon>
        <taxon>Fusobacterium</taxon>
    </lineage>
</organism>
<reference key="1">
    <citation type="journal article" date="2002" name="J. Bacteriol.">
        <title>Genome sequence and analysis of the oral bacterium Fusobacterium nucleatum strain ATCC 25586.</title>
        <authorList>
            <person name="Kapatral V."/>
            <person name="Anderson I."/>
            <person name="Ivanova N."/>
            <person name="Reznik G."/>
            <person name="Los T."/>
            <person name="Lykidis A."/>
            <person name="Bhattacharyya A."/>
            <person name="Bartman A."/>
            <person name="Gardner W."/>
            <person name="Grechkin G."/>
            <person name="Zhu L."/>
            <person name="Vasieva O."/>
            <person name="Chu L."/>
            <person name="Kogan Y."/>
            <person name="Chaga O."/>
            <person name="Goltsman E."/>
            <person name="Bernal A."/>
            <person name="Larsen N."/>
            <person name="D'Souza M."/>
            <person name="Walunas T."/>
            <person name="Pusch G."/>
            <person name="Haselkorn R."/>
            <person name="Fonstein M."/>
            <person name="Kyrpides N.C."/>
            <person name="Overbeek R."/>
        </authorList>
    </citation>
    <scope>NUCLEOTIDE SEQUENCE [LARGE SCALE GENOMIC DNA]</scope>
    <source>
        <strain>ATCC 25586 / DSM 15643 / BCRC 10681 / CIP 101130 / JCM 8532 / KCTC 2640 / LMG 13131 / VPI 4355</strain>
    </source>
</reference>
<accession>Q8RIG3</accession>
<gene>
    <name evidence="1" type="primary">rpmC</name>
    <name type="ordered locus">FN1637</name>
</gene>
<sequence length="60" mass="7161">MRAKEIREMTSEDLVVKCKELKEELFNLKFQLSLGQLTNTAKIREIRREIARINTILNER</sequence>
<evidence type="ECO:0000255" key="1">
    <source>
        <dbReference type="HAMAP-Rule" id="MF_00374"/>
    </source>
</evidence>
<evidence type="ECO:0000305" key="2"/>
<feature type="chain" id="PRO_0000130392" description="Large ribosomal subunit protein uL29">
    <location>
        <begin position="1"/>
        <end position="60"/>
    </location>
</feature>